<name>YOBD_ECOSE</name>
<dbReference type="EMBL" id="AP009240">
    <property type="protein sequence ID" value="BAG77518.1"/>
    <property type="molecule type" value="Genomic_DNA"/>
</dbReference>
<dbReference type="RefSeq" id="WP_000156255.1">
    <property type="nucleotide sequence ID" value="NC_011415.1"/>
</dbReference>
<dbReference type="KEGG" id="ecy:ECSE_1994"/>
<dbReference type="HOGENOM" id="CLU_133645_0_0_6"/>
<dbReference type="Proteomes" id="UP000008199">
    <property type="component" value="Chromosome"/>
</dbReference>
<dbReference type="GO" id="GO:0005886">
    <property type="term" value="C:plasma membrane"/>
    <property type="evidence" value="ECO:0007669"/>
    <property type="project" value="UniProtKB-SubCell"/>
</dbReference>
<dbReference type="HAMAP" id="MF_01071">
    <property type="entry name" value="UPF0266"/>
    <property type="match status" value="1"/>
</dbReference>
<dbReference type="InterPro" id="IPR009328">
    <property type="entry name" value="DUF986"/>
</dbReference>
<dbReference type="NCBIfam" id="NF002791">
    <property type="entry name" value="PRK02913.1"/>
    <property type="match status" value="1"/>
</dbReference>
<dbReference type="Pfam" id="PF06173">
    <property type="entry name" value="DUF986"/>
    <property type="match status" value="1"/>
</dbReference>
<dbReference type="PIRSF" id="PIRSF020687">
    <property type="entry name" value="UCP020687"/>
    <property type="match status" value="1"/>
</dbReference>
<comment type="subcellular location">
    <subcellularLocation>
        <location evidence="1">Cell inner membrane</location>
        <topology evidence="1">Multi-pass membrane protein</topology>
    </subcellularLocation>
</comment>
<comment type="similarity">
    <text evidence="1">Belongs to the UPF0266 family.</text>
</comment>
<evidence type="ECO:0000255" key="1">
    <source>
        <dbReference type="HAMAP-Rule" id="MF_01071"/>
    </source>
</evidence>
<reference key="1">
    <citation type="journal article" date="2008" name="DNA Res.">
        <title>Complete genome sequence and comparative analysis of the wild-type commensal Escherichia coli strain SE11 isolated from a healthy adult.</title>
        <authorList>
            <person name="Oshima K."/>
            <person name="Toh H."/>
            <person name="Ogura Y."/>
            <person name="Sasamoto H."/>
            <person name="Morita H."/>
            <person name="Park S.-H."/>
            <person name="Ooka T."/>
            <person name="Iyoda S."/>
            <person name="Taylor T.D."/>
            <person name="Hayashi T."/>
            <person name="Itoh K."/>
            <person name="Hattori M."/>
        </authorList>
    </citation>
    <scope>NUCLEOTIDE SEQUENCE [LARGE SCALE GENOMIC DNA]</scope>
    <source>
        <strain>SE11</strain>
    </source>
</reference>
<organism>
    <name type="scientific">Escherichia coli (strain SE11)</name>
    <dbReference type="NCBI Taxonomy" id="409438"/>
    <lineage>
        <taxon>Bacteria</taxon>
        <taxon>Pseudomonadati</taxon>
        <taxon>Pseudomonadota</taxon>
        <taxon>Gammaproteobacteria</taxon>
        <taxon>Enterobacterales</taxon>
        <taxon>Enterobacteriaceae</taxon>
        <taxon>Escherichia</taxon>
    </lineage>
</organism>
<gene>
    <name evidence="1" type="primary">yobD</name>
    <name type="ordered locus">ECSE_1994</name>
</gene>
<protein>
    <recommendedName>
        <fullName evidence="1">UPF0266 membrane protein YobD</fullName>
    </recommendedName>
</protein>
<proteinExistence type="inferred from homology"/>
<sequence length="152" mass="17615">MTITDLVLILFIAALLAFAIYDQFIMPRRNGPTLLAIPLLRRGRIDSVIFVGLIVILIYNNVTNHGALITTWLLSALALMGFYIFWIRVPKIIFKQKGFFFANVWIEYSRIKAMNLSEDGVLVMQLEQRRLLIRVRNIDDLEKIYKLLVSTQ</sequence>
<keyword id="KW-0997">Cell inner membrane</keyword>
<keyword id="KW-1003">Cell membrane</keyword>
<keyword id="KW-0472">Membrane</keyword>
<keyword id="KW-0812">Transmembrane</keyword>
<keyword id="KW-1133">Transmembrane helix</keyword>
<feature type="chain" id="PRO_1000136641" description="UPF0266 membrane protein YobD">
    <location>
        <begin position="1"/>
        <end position="152"/>
    </location>
</feature>
<feature type="transmembrane region" description="Helical" evidence="1">
    <location>
        <begin position="6"/>
        <end position="26"/>
    </location>
</feature>
<feature type="transmembrane region" description="Helical" evidence="1">
    <location>
        <begin position="45"/>
        <end position="65"/>
    </location>
</feature>
<feature type="transmembrane region" description="Helical" evidence="1">
    <location>
        <begin position="67"/>
        <end position="87"/>
    </location>
</feature>
<accession>B6IBP7</accession>